<proteinExistence type="evidence at protein level"/>
<protein>
    <recommendedName>
        <fullName>Putative lipoprotein LpqT</fullName>
    </recommendedName>
</protein>
<gene>
    <name type="primary">lpqT</name>
    <name type="ordered locus">Rv1016c</name>
    <name type="ORF">MTCY10G2.33</name>
</gene>
<dbReference type="EMBL" id="AL123456">
    <property type="protein sequence ID" value="CCP43766.1"/>
    <property type="molecule type" value="Genomic_DNA"/>
</dbReference>
<dbReference type="PIR" id="C70622">
    <property type="entry name" value="C70622"/>
</dbReference>
<dbReference type="RefSeq" id="NP_215532.1">
    <property type="nucleotide sequence ID" value="NC_000962.3"/>
</dbReference>
<dbReference type="RefSeq" id="WP_003898691.1">
    <property type="nucleotide sequence ID" value="NC_000962.3"/>
</dbReference>
<dbReference type="SMR" id="P9WK59"/>
<dbReference type="STRING" id="83332.Rv1016c"/>
<dbReference type="PaxDb" id="83332-Rv1016c"/>
<dbReference type="DNASU" id="886066"/>
<dbReference type="GeneID" id="886066"/>
<dbReference type="KEGG" id="mtu:Rv1016c"/>
<dbReference type="KEGG" id="mtv:RVBD_1016c"/>
<dbReference type="PATRIC" id="fig|83332.111.peg.1126"/>
<dbReference type="TubercuList" id="Rv1016c"/>
<dbReference type="eggNOG" id="ENOG5031CXX">
    <property type="taxonomic scope" value="Bacteria"/>
</dbReference>
<dbReference type="InParanoid" id="P9WK59"/>
<dbReference type="OrthoDB" id="4749152at2"/>
<dbReference type="Proteomes" id="UP000001584">
    <property type="component" value="Chromosome"/>
</dbReference>
<dbReference type="GO" id="GO:0009274">
    <property type="term" value="C:peptidoglycan-based cell wall"/>
    <property type="evidence" value="ECO:0007005"/>
    <property type="project" value="MTBBASE"/>
</dbReference>
<dbReference type="GO" id="GO:0005886">
    <property type="term" value="C:plasma membrane"/>
    <property type="evidence" value="ECO:0007669"/>
    <property type="project" value="UniProtKB-SubCell"/>
</dbReference>
<dbReference type="Gene3D" id="3.40.1000.10">
    <property type="entry name" value="Mog1/PsbP, alpha/beta/alpha sandwich"/>
    <property type="match status" value="1"/>
</dbReference>
<dbReference type="InterPro" id="IPR019674">
    <property type="entry name" value="Lipoprotein_LpqN/LpqT-like"/>
</dbReference>
<dbReference type="Pfam" id="PF10738">
    <property type="entry name" value="Lpp-LpqN"/>
    <property type="match status" value="1"/>
</dbReference>
<dbReference type="PROSITE" id="PS51257">
    <property type="entry name" value="PROKAR_LIPOPROTEIN"/>
    <property type="match status" value="1"/>
</dbReference>
<evidence type="ECO:0000255" key="1">
    <source>
        <dbReference type="PROSITE-ProRule" id="PRU00303"/>
    </source>
</evidence>
<name>LPQT_MYCTU</name>
<accession>P9WK59</accession>
<accession>L0T5K8</accession>
<accession>P96384</accession>
<reference key="1">
    <citation type="journal article" date="1998" name="Nature">
        <title>Deciphering the biology of Mycobacterium tuberculosis from the complete genome sequence.</title>
        <authorList>
            <person name="Cole S.T."/>
            <person name="Brosch R."/>
            <person name="Parkhill J."/>
            <person name="Garnier T."/>
            <person name="Churcher C.M."/>
            <person name="Harris D.E."/>
            <person name="Gordon S.V."/>
            <person name="Eiglmeier K."/>
            <person name="Gas S."/>
            <person name="Barry C.E. III"/>
            <person name="Tekaia F."/>
            <person name="Badcock K."/>
            <person name="Basham D."/>
            <person name="Brown D."/>
            <person name="Chillingworth T."/>
            <person name="Connor R."/>
            <person name="Davies R.M."/>
            <person name="Devlin K."/>
            <person name="Feltwell T."/>
            <person name="Gentles S."/>
            <person name="Hamlin N."/>
            <person name="Holroyd S."/>
            <person name="Hornsby T."/>
            <person name="Jagels K."/>
            <person name="Krogh A."/>
            <person name="McLean J."/>
            <person name="Moule S."/>
            <person name="Murphy L.D."/>
            <person name="Oliver S."/>
            <person name="Osborne J."/>
            <person name="Quail M.A."/>
            <person name="Rajandream M.A."/>
            <person name="Rogers J."/>
            <person name="Rutter S."/>
            <person name="Seeger K."/>
            <person name="Skelton S."/>
            <person name="Squares S."/>
            <person name="Squares R."/>
            <person name="Sulston J.E."/>
            <person name="Taylor K."/>
            <person name="Whitehead S."/>
            <person name="Barrell B.G."/>
        </authorList>
    </citation>
    <scope>NUCLEOTIDE SEQUENCE [LARGE SCALE GENOMIC DNA]</scope>
    <source>
        <strain>ATCC 25618 / H37Rv</strain>
    </source>
</reference>
<reference key="2">
    <citation type="journal article" date="2011" name="Mol. Cell. Proteomics">
        <title>Proteogenomic analysis of Mycobacterium tuberculosis by high resolution mass spectrometry.</title>
        <authorList>
            <person name="Kelkar D.S."/>
            <person name="Kumar D."/>
            <person name="Kumar P."/>
            <person name="Balakrishnan L."/>
            <person name="Muthusamy B."/>
            <person name="Yadav A.K."/>
            <person name="Shrivastava P."/>
            <person name="Marimuthu A."/>
            <person name="Anand S."/>
            <person name="Sundaram H."/>
            <person name="Kingsbury R."/>
            <person name="Harsha H.C."/>
            <person name="Nair B."/>
            <person name="Prasad T.S."/>
            <person name="Chauhan D.S."/>
            <person name="Katoch K."/>
            <person name="Katoch V.M."/>
            <person name="Kumar P."/>
            <person name="Chaerkady R."/>
            <person name="Ramachandran S."/>
            <person name="Dash D."/>
            <person name="Pandey A."/>
        </authorList>
    </citation>
    <scope>IDENTIFICATION BY MASS SPECTROMETRY [LARGE SCALE ANALYSIS]</scope>
    <source>
        <strain>ATCC 25618 / H37Rv</strain>
    </source>
</reference>
<feature type="signal peptide" evidence="1">
    <location>
        <begin position="1"/>
        <end position="29"/>
    </location>
</feature>
<feature type="chain" id="PRO_0000018131" description="Putative lipoprotein LpqT">
    <location>
        <begin position="30"/>
        <end position="226"/>
    </location>
</feature>
<feature type="lipid moiety-binding region" description="N-palmitoyl cysteine" evidence="1">
    <location>
        <position position="30"/>
    </location>
</feature>
<feature type="lipid moiety-binding region" description="S-diacylglycerol cysteine" evidence="1">
    <location>
        <position position="30"/>
    </location>
</feature>
<keyword id="KW-1003">Cell membrane</keyword>
<keyword id="KW-0449">Lipoprotein</keyword>
<keyword id="KW-0472">Membrane</keyword>
<keyword id="KW-0564">Palmitate</keyword>
<keyword id="KW-1185">Reference proteome</keyword>
<keyword id="KW-0732">Signal</keyword>
<sequence>MAGRRCPQDSVRPLAVAVAVATLAMSAVACGPKSPDFQSILSTSPTTSAVSTTTEVPVPLWKYLESVGVTGEPVAPSSLTDLTVSIPTPPGWAPMKNPNITPNTEMIAKGESYPTAMLMVFKLHRDFDIAEALKHGTADARLSTNFTELDSSTADFNGFPSSMIQGSYDLHGRRLHTWNRIVFPTGAPPAKQRYLVQLTITSLANEAVKHASDIEAIIAGFVVAAK</sequence>
<comment type="subcellular location">
    <subcellularLocation>
        <location evidence="1">Cell membrane</location>
        <topology evidence="1">Lipid-anchor</topology>
    </subcellularLocation>
</comment>
<organism>
    <name type="scientific">Mycobacterium tuberculosis (strain ATCC 25618 / H37Rv)</name>
    <dbReference type="NCBI Taxonomy" id="83332"/>
    <lineage>
        <taxon>Bacteria</taxon>
        <taxon>Bacillati</taxon>
        <taxon>Actinomycetota</taxon>
        <taxon>Actinomycetes</taxon>
        <taxon>Mycobacteriales</taxon>
        <taxon>Mycobacteriaceae</taxon>
        <taxon>Mycobacterium</taxon>
        <taxon>Mycobacterium tuberculosis complex</taxon>
    </lineage>
</organism>